<comment type="function">
    <text evidence="1">Forms oxaloacetate, a four-carbon dicarboxylic acid source for the tricarboxylic acid cycle.</text>
</comment>
<comment type="catalytic activity">
    <reaction evidence="1">
        <text>oxaloacetate + phosphate = phosphoenolpyruvate + hydrogencarbonate</text>
        <dbReference type="Rhea" id="RHEA:28370"/>
        <dbReference type="ChEBI" id="CHEBI:16452"/>
        <dbReference type="ChEBI" id="CHEBI:17544"/>
        <dbReference type="ChEBI" id="CHEBI:43474"/>
        <dbReference type="ChEBI" id="CHEBI:58702"/>
        <dbReference type="EC" id="4.1.1.31"/>
    </reaction>
</comment>
<comment type="cofactor">
    <cofactor evidence="1">
        <name>Mg(2+)</name>
        <dbReference type="ChEBI" id="CHEBI:18420"/>
    </cofactor>
</comment>
<comment type="similarity">
    <text evidence="1">Belongs to the PEPCase type 1 family.</text>
</comment>
<gene>
    <name evidence="1" type="primary">ppc</name>
    <name type="ordered locus">YPA_0095</name>
</gene>
<proteinExistence type="inferred from homology"/>
<accession>Q1CBV8</accession>
<dbReference type="EC" id="4.1.1.31" evidence="1"/>
<dbReference type="EMBL" id="CP000308">
    <property type="protein sequence ID" value="ABG12064.1"/>
    <property type="molecule type" value="Genomic_DNA"/>
</dbReference>
<dbReference type="RefSeq" id="WP_002209491.1">
    <property type="nucleotide sequence ID" value="NZ_CP009906.1"/>
</dbReference>
<dbReference type="SMR" id="Q1CBV8"/>
<dbReference type="GeneID" id="57974773"/>
<dbReference type="KEGG" id="ypa:YPA_0095"/>
<dbReference type="Proteomes" id="UP000001971">
    <property type="component" value="Chromosome"/>
</dbReference>
<dbReference type="GO" id="GO:0005829">
    <property type="term" value="C:cytosol"/>
    <property type="evidence" value="ECO:0007669"/>
    <property type="project" value="TreeGrafter"/>
</dbReference>
<dbReference type="GO" id="GO:0000287">
    <property type="term" value="F:magnesium ion binding"/>
    <property type="evidence" value="ECO:0007669"/>
    <property type="project" value="UniProtKB-UniRule"/>
</dbReference>
<dbReference type="GO" id="GO:0008964">
    <property type="term" value="F:phosphoenolpyruvate carboxylase activity"/>
    <property type="evidence" value="ECO:0007669"/>
    <property type="project" value="UniProtKB-UniRule"/>
</dbReference>
<dbReference type="GO" id="GO:0015977">
    <property type="term" value="P:carbon fixation"/>
    <property type="evidence" value="ECO:0007669"/>
    <property type="project" value="UniProtKB-UniRule"/>
</dbReference>
<dbReference type="GO" id="GO:0006107">
    <property type="term" value="P:oxaloacetate metabolic process"/>
    <property type="evidence" value="ECO:0007669"/>
    <property type="project" value="UniProtKB-UniRule"/>
</dbReference>
<dbReference type="GO" id="GO:0006099">
    <property type="term" value="P:tricarboxylic acid cycle"/>
    <property type="evidence" value="ECO:0007669"/>
    <property type="project" value="InterPro"/>
</dbReference>
<dbReference type="FunFam" id="1.20.1440.90:FF:000002">
    <property type="entry name" value="Phosphoenolpyruvate carboxylase"/>
    <property type="match status" value="1"/>
</dbReference>
<dbReference type="Gene3D" id="1.20.1440.90">
    <property type="entry name" value="Phosphoenolpyruvate/pyruvate domain"/>
    <property type="match status" value="1"/>
</dbReference>
<dbReference type="HAMAP" id="MF_00595">
    <property type="entry name" value="PEPcase_type1"/>
    <property type="match status" value="1"/>
</dbReference>
<dbReference type="InterPro" id="IPR021135">
    <property type="entry name" value="PEP_COase"/>
</dbReference>
<dbReference type="InterPro" id="IPR022805">
    <property type="entry name" value="PEP_COase_bac/pln-type"/>
</dbReference>
<dbReference type="InterPro" id="IPR018129">
    <property type="entry name" value="PEP_COase_Lys_AS"/>
</dbReference>
<dbReference type="InterPro" id="IPR033129">
    <property type="entry name" value="PEPCASE_His_AS"/>
</dbReference>
<dbReference type="InterPro" id="IPR015813">
    <property type="entry name" value="Pyrv/PenolPyrv_kinase-like_dom"/>
</dbReference>
<dbReference type="NCBIfam" id="NF000584">
    <property type="entry name" value="PRK00009.1"/>
    <property type="match status" value="1"/>
</dbReference>
<dbReference type="PANTHER" id="PTHR30523">
    <property type="entry name" value="PHOSPHOENOLPYRUVATE CARBOXYLASE"/>
    <property type="match status" value="1"/>
</dbReference>
<dbReference type="PANTHER" id="PTHR30523:SF6">
    <property type="entry name" value="PHOSPHOENOLPYRUVATE CARBOXYLASE"/>
    <property type="match status" value="1"/>
</dbReference>
<dbReference type="Pfam" id="PF00311">
    <property type="entry name" value="PEPcase"/>
    <property type="match status" value="1"/>
</dbReference>
<dbReference type="PRINTS" id="PR00150">
    <property type="entry name" value="PEPCARBXLASE"/>
</dbReference>
<dbReference type="SUPFAM" id="SSF51621">
    <property type="entry name" value="Phosphoenolpyruvate/pyruvate domain"/>
    <property type="match status" value="1"/>
</dbReference>
<dbReference type="PROSITE" id="PS00781">
    <property type="entry name" value="PEPCASE_1"/>
    <property type="match status" value="1"/>
</dbReference>
<dbReference type="PROSITE" id="PS00393">
    <property type="entry name" value="PEPCASE_2"/>
    <property type="match status" value="1"/>
</dbReference>
<keyword id="KW-0120">Carbon dioxide fixation</keyword>
<keyword id="KW-0456">Lyase</keyword>
<keyword id="KW-0460">Magnesium</keyword>
<reference key="1">
    <citation type="journal article" date="2006" name="J. Bacteriol.">
        <title>Complete genome sequence of Yersinia pestis strains Antiqua and Nepal516: evidence of gene reduction in an emerging pathogen.</title>
        <authorList>
            <person name="Chain P.S.G."/>
            <person name="Hu P."/>
            <person name="Malfatti S.A."/>
            <person name="Radnedge L."/>
            <person name="Larimer F."/>
            <person name="Vergez L.M."/>
            <person name="Worsham P."/>
            <person name="Chu M.C."/>
            <person name="Andersen G.L."/>
        </authorList>
    </citation>
    <scope>NUCLEOTIDE SEQUENCE [LARGE SCALE GENOMIC DNA]</scope>
    <source>
        <strain>Antiqua</strain>
    </source>
</reference>
<name>CAPP_YERPA</name>
<organism>
    <name type="scientific">Yersinia pestis bv. Antiqua (strain Antiqua)</name>
    <dbReference type="NCBI Taxonomy" id="360102"/>
    <lineage>
        <taxon>Bacteria</taxon>
        <taxon>Pseudomonadati</taxon>
        <taxon>Pseudomonadota</taxon>
        <taxon>Gammaproteobacteria</taxon>
        <taxon>Enterobacterales</taxon>
        <taxon>Yersiniaceae</taxon>
        <taxon>Yersinia</taxon>
    </lineage>
</organism>
<protein>
    <recommendedName>
        <fullName evidence="1">Phosphoenolpyruvate carboxylase</fullName>
        <shortName evidence="1">PEPC</shortName>
        <shortName evidence="1">PEPCase</shortName>
        <ecNumber evidence="1">4.1.1.31</ecNumber>
    </recommendedName>
</protein>
<evidence type="ECO:0000255" key="1">
    <source>
        <dbReference type="HAMAP-Rule" id="MF_00595"/>
    </source>
</evidence>
<feature type="chain" id="PRO_1000025605" description="Phosphoenolpyruvate carboxylase">
    <location>
        <begin position="1"/>
        <end position="878"/>
    </location>
</feature>
<feature type="active site" evidence="1">
    <location>
        <position position="137"/>
    </location>
</feature>
<feature type="active site" evidence="1">
    <location>
        <position position="545"/>
    </location>
</feature>
<sequence length="878" mass="98324">MNEQYSAMRSNVSMLGTLLGDTIKEALGEHILDRVETIRKLSKSSRAGNEASRQELLTTLQNLSNDELLPVARAFSQFLNLTNTAEQYHSISPHGEAASNPEALAQLFTRLKDKKLSDQDMRSAVDDLSIELVLTAHPTEITRRTLIHKLVEVNTCLSQLDHNDLADYERNKIMRRLRQLVAQSWHTDEIRKLRPSPVDEAKWGFAVVENSLWEGVPAFLREFNEQLENSLDYRLPVEAVPIRFTSWMGGDRDGNPNVTAEITRHVLLLSRWKATDLFLRDIQVLVSELSMSECTPELRELAGGEEVLEPYRQLMKNVRTQLTNTQAYLEARLKGERVLPPHDLLVSNDQLWEPLYACYQSLKACGMEIIANGQLLDTLRRVRCFGVPLVRIDVRQESTRHTDAIAELTRYLGLGDYESWSESDKQAFLVRELNSKRPLVPLKWEPSAETQEVLETCRVIAEAPQGSIAAYVISMAKVPSDVLAVHLLLKEAGCPFTLPVAPLFETLDDLNNADDVMTQLLGIDWYRGLIQGKQMVMIGYSDSAKDAGVMAASWAQYRAQDALIKTCEKAGITLTLFHGRGGSIGRGGAPAHAALLSQPPGSLKGGLRVTEQGEMIRFKFGLPEVTISSLALYAGAILEANLLPPPEPKKEWIEVMDLLSDASCDMYRSYVRENPEFVRYFRAATPELELGKLPLGSRPAKRRPDGGVESLRAIPWIFAWTQNRLMLPAWLGAGAGLQRAIDAGKQDVLATMCRDWPFFSTRIGMLEMVFAKADLWLAEYYDQRLVDKSLWPLGQQLRDQLAADIKVVLAIANDDHLMADLPWIAESIALRNVYTDPLNVLQAELLHRSRQQEHPDACVEQALMVTIAGVAAGMRNTG</sequence>